<proteinExistence type="inferred from homology"/>
<evidence type="ECO:0000250" key="1">
    <source>
        <dbReference type="UniProtKB" id="P03886"/>
    </source>
</evidence>
<evidence type="ECO:0000250" key="2">
    <source>
        <dbReference type="UniProtKB" id="P03887"/>
    </source>
</evidence>
<evidence type="ECO:0000255" key="3"/>
<evidence type="ECO:0000305" key="4"/>
<protein>
    <recommendedName>
        <fullName>NADH-ubiquinone oxidoreductase chain 1</fullName>
        <ecNumber evidence="1">7.1.1.2</ecNumber>
    </recommendedName>
    <alternativeName>
        <fullName>NADH dehydrogenase subunit 1</fullName>
    </alternativeName>
</protein>
<reference key="1">
    <citation type="journal article" date="2002" name="J. Mol. Evol.">
        <title>Intra- and interfamily relationships of Vespertilionidae inferred by various molecular markers including SINE insertion data.</title>
        <authorList>
            <person name="Kawai K."/>
            <person name="Nikaido M."/>
            <person name="Harada M."/>
            <person name="Matsumura S."/>
            <person name="Lin L.K."/>
            <person name="Wu Y."/>
            <person name="Hasegawa M."/>
            <person name="Okada N."/>
        </authorList>
    </citation>
    <scope>NUCLEOTIDE SEQUENCE [GENOMIC DNA]</scope>
</reference>
<gene>
    <name type="primary">MT-ND1</name>
    <name type="synonym">MTND1</name>
    <name type="synonym">NADH1</name>
    <name type="synonym">ND1</name>
</gene>
<accession>Q8M897</accession>
<organism>
    <name type="scientific">Hipposideros armiger terasensis</name>
    <name type="common">Formosan leaf-nosed bat</name>
    <name type="synonym">Hipposideros terasensis</name>
    <dbReference type="NCBI Taxonomy" id="186991"/>
    <lineage>
        <taxon>Eukaryota</taxon>
        <taxon>Metazoa</taxon>
        <taxon>Chordata</taxon>
        <taxon>Craniata</taxon>
        <taxon>Vertebrata</taxon>
        <taxon>Euteleostomi</taxon>
        <taxon>Mammalia</taxon>
        <taxon>Eutheria</taxon>
        <taxon>Laurasiatheria</taxon>
        <taxon>Chiroptera</taxon>
        <taxon>Yinpterochiroptera</taxon>
        <taxon>Rhinolophoidea</taxon>
        <taxon>Hipposideridae</taxon>
        <taxon>Hipposideros</taxon>
    </lineage>
</organism>
<dbReference type="EC" id="7.1.1.2" evidence="1"/>
<dbReference type="EMBL" id="AB079803">
    <property type="protein sequence ID" value="BAB92028.1"/>
    <property type="molecule type" value="Genomic_DNA"/>
</dbReference>
<dbReference type="SMR" id="Q8M897"/>
<dbReference type="GO" id="GO:0005743">
    <property type="term" value="C:mitochondrial inner membrane"/>
    <property type="evidence" value="ECO:0007669"/>
    <property type="project" value="UniProtKB-SubCell"/>
</dbReference>
<dbReference type="GO" id="GO:0008137">
    <property type="term" value="F:NADH dehydrogenase (ubiquinone) activity"/>
    <property type="evidence" value="ECO:0000250"/>
    <property type="project" value="UniProtKB"/>
</dbReference>
<dbReference type="GO" id="GO:0006120">
    <property type="term" value="P:mitochondrial electron transport, NADH to ubiquinone"/>
    <property type="evidence" value="ECO:0000250"/>
    <property type="project" value="UniProtKB"/>
</dbReference>
<dbReference type="GO" id="GO:0032981">
    <property type="term" value="P:mitochondrial respiratory chain complex I assembly"/>
    <property type="evidence" value="ECO:0000250"/>
    <property type="project" value="UniProtKB"/>
</dbReference>
<dbReference type="HAMAP" id="MF_01350">
    <property type="entry name" value="NDH1_NuoH"/>
    <property type="match status" value="1"/>
</dbReference>
<dbReference type="InterPro" id="IPR001694">
    <property type="entry name" value="NADH_UbQ_OxRdtase_su1/FPO"/>
</dbReference>
<dbReference type="InterPro" id="IPR018086">
    <property type="entry name" value="NADH_UbQ_OxRdtase_su1_CS"/>
</dbReference>
<dbReference type="PANTHER" id="PTHR11432">
    <property type="entry name" value="NADH DEHYDROGENASE SUBUNIT 1"/>
    <property type="match status" value="1"/>
</dbReference>
<dbReference type="PANTHER" id="PTHR11432:SF3">
    <property type="entry name" value="NADH-UBIQUINONE OXIDOREDUCTASE CHAIN 1"/>
    <property type="match status" value="1"/>
</dbReference>
<dbReference type="Pfam" id="PF00146">
    <property type="entry name" value="NADHdh"/>
    <property type="match status" value="1"/>
</dbReference>
<dbReference type="PROSITE" id="PS00667">
    <property type="entry name" value="COMPLEX1_ND1_1"/>
    <property type="match status" value="1"/>
</dbReference>
<dbReference type="PROSITE" id="PS00668">
    <property type="entry name" value="COMPLEX1_ND1_2"/>
    <property type="match status" value="1"/>
</dbReference>
<geneLocation type="mitochondrion"/>
<feature type="chain" id="PRO_0000117412" description="NADH-ubiquinone oxidoreductase chain 1">
    <location>
        <begin position="1"/>
        <end position="318"/>
    </location>
</feature>
<feature type="transmembrane region" description="Helical" evidence="3">
    <location>
        <begin position="2"/>
        <end position="22"/>
    </location>
</feature>
<feature type="transmembrane region" description="Helical" evidence="3">
    <location>
        <begin position="68"/>
        <end position="88"/>
    </location>
</feature>
<feature type="transmembrane region" description="Helical" evidence="3">
    <location>
        <begin position="100"/>
        <end position="120"/>
    </location>
</feature>
<feature type="transmembrane region" description="Helical" evidence="3">
    <location>
        <begin position="146"/>
        <end position="166"/>
    </location>
</feature>
<feature type="transmembrane region" description="Helical" evidence="3">
    <location>
        <begin position="171"/>
        <end position="191"/>
    </location>
</feature>
<feature type="transmembrane region" description="Helical" evidence="3">
    <location>
        <begin position="222"/>
        <end position="242"/>
    </location>
</feature>
<feature type="transmembrane region" description="Helical" evidence="3">
    <location>
        <begin position="253"/>
        <end position="273"/>
    </location>
</feature>
<feature type="transmembrane region" description="Helical" evidence="3">
    <location>
        <begin position="293"/>
        <end position="313"/>
    </location>
</feature>
<sequence length="318" mass="35740">MFMINLLMMIVPILLAVAFLTLVERKVLGYMQLRKGPNVVGPYGLLQPIADAIKLFTKEPLRPLTSSISMFIMAPILALTLALTMWTPLPMPYPLINMNLGILFMLAMSSLAVYSILWSGWASNSKYALIGALRAVAQTISYEVTLAIILLSVLLLSGSFTLPTLITTQEHIWLIVPSWPLAMMWFISTLAETNRAPFDLTEGESELVSGFNVEYAGGPFALFFLAEYANIIMMNIFTTILFLGAFHNPLMPELYTINFVTKSMLLTISFLWVRASYPRFRYDQLMHLLWKNFLPLTLALCMWHVTMPIITAGVPPLT</sequence>
<comment type="function">
    <text evidence="1">Core subunit of the mitochondrial membrane respiratory chain NADH dehydrogenase (Complex I) which catalyzes electron transfer from NADH through the respiratory chain, using ubiquinone as an electron acceptor. Essential for the catalytic activity and assembly of complex I.</text>
</comment>
<comment type="catalytic activity">
    <reaction evidence="1">
        <text>a ubiquinone + NADH + 5 H(+)(in) = a ubiquinol + NAD(+) + 4 H(+)(out)</text>
        <dbReference type="Rhea" id="RHEA:29091"/>
        <dbReference type="Rhea" id="RHEA-COMP:9565"/>
        <dbReference type="Rhea" id="RHEA-COMP:9566"/>
        <dbReference type="ChEBI" id="CHEBI:15378"/>
        <dbReference type="ChEBI" id="CHEBI:16389"/>
        <dbReference type="ChEBI" id="CHEBI:17976"/>
        <dbReference type="ChEBI" id="CHEBI:57540"/>
        <dbReference type="ChEBI" id="CHEBI:57945"/>
        <dbReference type="EC" id="7.1.1.2"/>
    </reaction>
</comment>
<comment type="subunit">
    <text evidence="2">Core subunit of respiratory chain NADH dehydrogenase (Complex I) which is composed of 45 different subunits.</text>
</comment>
<comment type="subcellular location">
    <subcellularLocation>
        <location evidence="2">Mitochondrion inner membrane</location>
        <topology evidence="3">Multi-pass membrane protein</topology>
    </subcellularLocation>
</comment>
<comment type="similarity">
    <text evidence="4">Belongs to the complex I subunit 1 family.</text>
</comment>
<name>NU1M_HIPAE</name>
<keyword id="KW-0249">Electron transport</keyword>
<keyword id="KW-0472">Membrane</keyword>
<keyword id="KW-0496">Mitochondrion</keyword>
<keyword id="KW-0999">Mitochondrion inner membrane</keyword>
<keyword id="KW-0520">NAD</keyword>
<keyword id="KW-0679">Respiratory chain</keyword>
<keyword id="KW-1278">Translocase</keyword>
<keyword id="KW-0812">Transmembrane</keyword>
<keyword id="KW-1133">Transmembrane helix</keyword>
<keyword id="KW-0813">Transport</keyword>
<keyword id="KW-0830">Ubiquinone</keyword>